<gene>
    <name evidence="1" type="primary">ade</name>
    <name type="ordered locus">CLI_0367</name>
</gene>
<name>ADEC_CLOBL</name>
<reference key="1">
    <citation type="submission" date="2007-06" db="EMBL/GenBank/DDBJ databases">
        <authorList>
            <person name="Brinkac L.M."/>
            <person name="Daugherty S."/>
            <person name="Dodson R.J."/>
            <person name="Madupu R."/>
            <person name="Brown J.L."/>
            <person name="Bruce D."/>
            <person name="Detter C."/>
            <person name="Munk C."/>
            <person name="Smith L.A."/>
            <person name="Smith T.J."/>
            <person name="White O."/>
            <person name="Brettin T.S."/>
        </authorList>
    </citation>
    <scope>NUCLEOTIDE SEQUENCE [LARGE SCALE GENOMIC DNA]</scope>
    <source>
        <strain>Langeland / NCTC 10281 / Type F</strain>
    </source>
</reference>
<sequence length="599" mass="65351">MFNKFNTKPLWEVSKTLSSVAQGFEPADMVIINSRLINVCTREVIENTDVAVSCGRIALVGDAKHCIGENTEVIDAKGQYIAPGFLDGHIHVESSMLSVSEYARSVVPHGTVGIYMDPHEICNVLGLNGVRYMIEDGKGTPLKNMVTTPSCVPAVPGFEDTGAAVGPEDVRETMKWDEIVGLGEMMNFPGILYSTDHAHGVVGETLKASKTVTGHYSLPETGKGLNGYIASGVRCCHESTRAEDALAKMRLGMYAMFREGSAWHDLKEVSKAITENKVDSRFAVLISDDTHPHTLLKDGHLDHIIKRAIEEGIEPLTAIQMVTINCAQCFQMDHELGSITPGKCADIVFIEDLKDVKITKVIIDGNLVAKGGLLTTSIAKYDYPEDAMNSMHIKNKITPDSFNIMAPNKEKITARVIEIIPERVGTYERHIELKVKDDKVQCDPNKDVLKAVVFERHHETGKAGYGFVKGFGIKRGAMAATVAHDAHNLLVIGTNDEDMALAANTLIECGGGMVAVQDGKVLGLVPLPIAGLMSNKPLEEMAEMVEKLDSAWKEIGCDIVSPFMTMALIPLACLPELRLTNRGLVDCNKFEFVSLFVEE</sequence>
<protein>
    <recommendedName>
        <fullName evidence="1">Adenine deaminase</fullName>
        <shortName evidence="1">Adenase</shortName>
        <shortName evidence="1">Adenine aminase</shortName>
        <ecNumber evidence="1">3.5.4.2</ecNumber>
    </recommendedName>
</protein>
<evidence type="ECO:0000255" key="1">
    <source>
        <dbReference type="HAMAP-Rule" id="MF_01518"/>
    </source>
</evidence>
<evidence type="ECO:0000305" key="2"/>
<feature type="chain" id="PRO_0000318546" description="Adenine deaminase">
    <location>
        <begin position="1"/>
        <end position="599"/>
    </location>
</feature>
<accession>A7GA53</accession>
<proteinExistence type="inferred from homology"/>
<keyword id="KW-0378">Hydrolase</keyword>
<keyword id="KW-0464">Manganese</keyword>
<organism>
    <name type="scientific">Clostridium botulinum (strain Langeland / NCTC 10281 / Type F)</name>
    <dbReference type="NCBI Taxonomy" id="441772"/>
    <lineage>
        <taxon>Bacteria</taxon>
        <taxon>Bacillati</taxon>
        <taxon>Bacillota</taxon>
        <taxon>Clostridia</taxon>
        <taxon>Eubacteriales</taxon>
        <taxon>Clostridiaceae</taxon>
        <taxon>Clostridium</taxon>
    </lineage>
</organism>
<comment type="catalytic activity">
    <reaction evidence="1">
        <text>adenine + H2O + H(+) = hypoxanthine + NH4(+)</text>
        <dbReference type="Rhea" id="RHEA:23688"/>
        <dbReference type="ChEBI" id="CHEBI:15377"/>
        <dbReference type="ChEBI" id="CHEBI:15378"/>
        <dbReference type="ChEBI" id="CHEBI:16708"/>
        <dbReference type="ChEBI" id="CHEBI:17368"/>
        <dbReference type="ChEBI" id="CHEBI:28938"/>
        <dbReference type="EC" id="3.5.4.2"/>
    </reaction>
</comment>
<comment type="cofactor">
    <cofactor evidence="1">
        <name>Mn(2+)</name>
        <dbReference type="ChEBI" id="CHEBI:29035"/>
    </cofactor>
</comment>
<comment type="similarity">
    <text evidence="1">Belongs to the metallo-dependent hydrolases superfamily. Adenine deaminase family.</text>
</comment>
<comment type="sequence caution" evidence="2">
    <conflict type="erroneous initiation">
        <sequence resource="EMBL-CDS" id="ABS40266"/>
    </conflict>
</comment>
<dbReference type="EC" id="3.5.4.2" evidence="1"/>
<dbReference type="EMBL" id="CP000728">
    <property type="protein sequence ID" value="ABS40266.1"/>
    <property type="status" value="ALT_INIT"/>
    <property type="molecule type" value="Genomic_DNA"/>
</dbReference>
<dbReference type="RefSeq" id="WP_041173189.1">
    <property type="nucleotide sequence ID" value="NC_009699.1"/>
</dbReference>
<dbReference type="SMR" id="A7GA53"/>
<dbReference type="KEGG" id="cbf:CLI_0367"/>
<dbReference type="HOGENOM" id="CLU_027935_0_0_9"/>
<dbReference type="Proteomes" id="UP000002410">
    <property type="component" value="Chromosome"/>
</dbReference>
<dbReference type="GO" id="GO:0000034">
    <property type="term" value="F:adenine deaminase activity"/>
    <property type="evidence" value="ECO:0007669"/>
    <property type="project" value="UniProtKB-UniRule"/>
</dbReference>
<dbReference type="GO" id="GO:0006146">
    <property type="term" value="P:adenine catabolic process"/>
    <property type="evidence" value="ECO:0007669"/>
    <property type="project" value="InterPro"/>
</dbReference>
<dbReference type="CDD" id="cd01295">
    <property type="entry name" value="AdeC"/>
    <property type="match status" value="1"/>
</dbReference>
<dbReference type="FunFam" id="3.20.20.140:FF:000016">
    <property type="entry name" value="Adenine deaminase"/>
    <property type="match status" value="1"/>
</dbReference>
<dbReference type="Gene3D" id="3.20.20.140">
    <property type="entry name" value="Metal-dependent hydrolases"/>
    <property type="match status" value="1"/>
</dbReference>
<dbReference type="Gene3D" id="2.30.40.10">
    <property type="entry name" value="Urease, subunit C, domain 1"/>
    <property type="match status" value="1"/>
</dbReference>
<dbReference type="HAMAP" id="MF_01518">
    <property type="entry name" value="Adenine_deamin"/>
    <property type="match status" value="1"/>
</dbReference>
<dbReference type="InterPro" id="IPR006679">
    <property type="entry name" value="Adenine_deam"/>
</dbReference>
<dbReference type="InterPro" id="IPR026912">
    <property type="entry name" value="Adenine_deam_C"/>
</dbReference>
<dbReference type="InterPro" id="IPR006680">
    <property type="entry name" value="Amidohydro-rel"/>
</dbReference>
<dbReference type="InterPro" id="IPR011059">
    <property type="entry name" value="Metal-dep_hydrolase_composite"/>
</dbReference>
<dbReference type="InterPro" id="IPR032466">
    <property type="entry name" value="Metal_Hydrolase"/>
</dbReference>
<dbReference type="NCBIfam" id="TIGR01178">
    <property type="entry name" value="ade"/>
    <property type="match status" value="1"/>
</dbReference>
<dbReference type="PANTHER" id="PTHR11113:SF2">
    <property type="entry name" value="ADENINE DEAMINASE"/>
    <property type="match status" value="1"/>
</dbReference>
<dbReference type="PANTHER" id="PTHR11113">
    <property type="entry name" value="N-ACETYLGLUCOSAMINE-6-PHOSPHATE DEACETYLASE"/>
    <property type="match status" value="1"/>
</dbReference>
<dbReference type="Pfam" id="PF13382">
    <property type="entry name" value="Adenine_deam_C"/>
    <property type="match status" value="1"/>
</dbReference>
<dbReference type="Pfam" id="PF01979">
    <property type="entry name" value="Amidohydro_1"/>
    <property type="match status" value="1"/>
</dbReference>
<dbReference type="SUPFAM" id="SSF51338">
    <property type="entry name" value="Composite domain of metallo-dependent hydrolases"/>
    <property type="match status" value="1"/>
</dbReference>
<dbReference type="SUPFAM" id="SSF51556">
    <property type="entry name" value="Metallo-dependent hydrolases"/>
    <property type="match status" value="1"/>
</dbReference>